<organism>
    <name type="scientific">Homo sapiens</name>
    <name type="common">Human</name>
    <dbReference type="NCBI Taxonomy" id="9606"/>
    <lineage>
        <taxon>Eukaryota</taxon>
        <taxon>Metazoa</taxon>
        <taxon>Chordata</taxon>
        <taxon>Craniata</taxon>
        <taxon>Vertebrata</taxon>
        <taxon>Euteleostomi</taxon>
        <taxon>Mammalia</taxon>
        <taxon>Eutheria</taxon>
        <taxon>Euarchontoglires</taxon>
        <taxon>Primates</taxon>
        <taxon>Haplorrhini</taxon>
        <taxon>Catarrhini</taxon>
        <taxon>Hominidae</taxon>
        <taxon>Homo</taxon>
    </lineage>
</organism>
<proteinExistence type="evidence at transcript level"/>
<accession>O60542</accession>
<comment type="function">
    <text evidence="3 4">Growth factor that exhibits neurotrophic activity on mesencephalic dopaminergic and motor neurons (PubMed:11116144, PubMed:9491986). Acts by binding to its coreceptor, GFRA4, leading to autophosphorylation and activation of the RET receptor (PubMed:11116144).</text>
</comment>
<comment type="subunit">
    <text evidence="1 8">Homodimer; disulfide-linked (By similarity). Interacts with GFRA4 coreceptor and RET: forms a 2:2:2 ternary complex composed of PSPN ligand, GFRA4 and RET receptor (Probable).</text>
</comment>
<comment type="subcellular location">
    <subcellularLocation>
        <location evidence="4">Secreted</location>
    </subcellularLocation>
</comment>
<comment type="similarity">
    <text evidence="7">Belongs to the TGF-beta family. GDNF subfamily.</text>
</comment>
<evidence type="ECO:0000250" key="1">
    <source>
        <dbReference type="UniProtKB" id="Q5T4W7"/>
    </source>
</evidence>
<evidence type="ECO:0000255" key="2"/>
<evidence type="ECO:0000269" key="3">
    <source>
    </source>
</evidence>
<evidence type="ECO:0000269" key="4">
    <source>
    </source>
</evidence>
<evidence type="ECO:0000303" key="5">
    <source>
    </source>
</evidence>
<evidence type="ECO:0000303" key="6">
    <source>
    </source>
</evidence>
<evidence type="ECO:0000305" key="7"/>
<evidence type="ECO:0000305" key="8">
    <source>
    </source>
</evidence>
<evidence type="ECO:0000312" key="9">
    <source>
        <dbReference type="HGNC" id="HGNC:9579"/>
    </source>
</evidence>
<keyword id="KW-1015">Disulfide bond</keyword>
<keyword id="KW-0339">Growth factor</keyword>
<keyword id="KW-1185">Reference proteome</keyword>
<keyword id="KW-0964">Secreted</keyword>
<keyword id="KW-0732">Signal</keyword>
<reference key="1">
    <citation type="journal article" date="1998" name="Neuron">
        <title>Persephin, a novel neurotrophic factor related to GDNF and neurturin.</title>
        <authorList>
            <person name="Milbrandt J."/>
            <person name="de Sauvage F.J."/>
            <person name="Fahrner T.J."/>
            <person name="Baloh R.H."/>
            <person name="Leitner M.L."/>
            <person name="Tansey M.G."/>
            <person name="Lampe P.A."/>
            <person name="Heuckeroth R.O."/>
            <person name="Kotzbauer P.T."/>
            <person name="Simburger K.S."/>
            <person name="Golden J.P."/>
            <person name="Davies J.A."/>
            <person name="Vejsada R."/>
            <person name="Kato A.C."/>
            <person name="Hynes M."/>
            <person name="Sherman D."/>
            <person name="Nishimura M."/>
            <person name="Wang L.-C."/>
            <person name="Vandlen R."/>
            <person name="Moffat B."/>
            <person name="Klein R.D."/>
            <person name="Poulsen K."/>
            <person name="Gray C."/>
            <person name="Garces A."/>
            <person name="Henderson C.E."/>
            <person name="Phillips H.S."/>
            <person name="Johnson E.M."/>
        </authorList>
    </citation>
    <scope>NUCLEOTIDE SEQUENCE [MRNA]</scope>
    <scope>FUNCTION</scope>
    <scope>SUBCELLULAR LOCATION</scope>
</reference>
<reference key="2">
    <citation type="journal article" date="2001" name="J. Biol. Chem.">
        <title>Human glial cell line-derived neurotrophic factor receptor alpha4 is the receptor for persephin and is predominantly expressed in normal and malignant thyroid medullary cells.</title>
        <authorList>
            <person name="Lindahl M."/>
            <person name="Poteryaev D."/>
            <person name="Yu L."/>
            <person name="Arumae U."/>
            <person name="Timmusk T."/>
            <person name="Bongarzone I."/>
            <person name="Aiello A."/>
            <person name="Pierotti M.A."/>
            <person name="Airaksinen M.S."/>
            <person name="Saarma M."/>
        </authorList>
    </citation>
    <scope>FUNCTION</scope>
</reference>
<feature type="signal peptide" evidence="2">
    <location>
        <begin position="1"/>
        <end position="21"/>
    </location>
</feature>
<feature type="chain" id="PRO_0000034014" description="Persephin">
    <location>
        <begin position="22"/>
        <end position="156"/>
    </location>
</feature>
<feature type="disulfide bond" evidence="1">
    <location>
        <begin position="66"/>
        <end position="124"/>
    </location>
</feature>
<feature type="disulfide bond" evidence="1">
    <location>
        <begin position="93"/>
        <end position="152"/>
    </location>
</feature>
<feature type="disulfide bond" evidence="1">
    <location>
        <begin position="97"/>
        <end position="154"/>
    </location>
</feature>
<feature type="disulfide bond" description="Interchain" evidence="1">
    <location>
        <position position="123"/>
    </location>
</feature>
<dbReference type="EMBL" id="AF040962">
    <property type="protein sequence ID" value="AAC39640.1"/>
    <property type="molecule type" value="mRNA"/>
</dbReference>
<dbReference type="CCDS" id="CCDS12164.1"/>
<dbReference type="RefSeq" id="NP_004149.1">
    <property type="nucleotide sequence ID" value="NM_004158.5"/>
</dbReference>
<dbReference type="SMR" id="O60542"/>
<dbReference type="BioGRID" id="111607">
    <property type="interactions" value="31"/>
</dbReference>
<dbReference type="CORUM" id="O60542"/>
<dbReference type="FunCoup" id="O60542">
    <property type="interactions" value="555"/>
</dbReference>
<dbReference type="IntAct" id="O60542">
    <property type="interactions" value="4"/>
</dbReference>
<dbReference type="STRING" id="9606.ENSP00000245810"/>
<dbReference type="iPTMnet" id="O60542"/>
<dbReference type="PhosphoSitePlus" id="O60542"/>
<dbReference type="BioMuta" id="PSPN"/>
<dbReference type="MassIVE" id="O60542"/>
<dbReference type="PaxDb" id="9606-ENSP00000245810"/>
<dbReference type="Antibodypedia" id="42539">
    <property type="antibodies" value="221 antibodies from 26 providers"/>
</dbReference>
<dbReference type="DNASU" id="5623"/>
<dbReference type="Ensembl" id="ENST00000245810.2">
    <property type="protein sequence ID" value="ENSP00000245810.1"/>
    <property type="gene ID" value="ENSG00000125650.5"/>
</dbReference>
<dbReference type="GeneID" id="5623"/>
<dbReference type="KEGG" id="hsa:5623"/>
<dbReference type="MANE-Select" id="ENST00000245810.2">
    <property type="protein sequence ID" value="ENSP00000245810.1"/>
    <property type="RefSeq nucleotide sequence ID" value="NM_004158.5"/>
    <property type="RefSeq protein sequence ID" value="NP_004149.1"/>
</dbReference>
<dbReference type="UCSC" id="uc010xja.2">
    <property type="organism name" value="human"/>
</dbReference>
<dbReference type="AGR" id="HGNC:9579"/>
<dbReference type="CTD" id="5623"/>
<dbReference type="DisGeNET" id="5623"/>
<dbReference type="GeneCards" id="PSPN"/>
<dbReference type="HGNC" id="HGNC:9579">
    <property type="gene designation" value="PSPN"/>
</dbReference>
<dbReference type="HPA" id="ENSG00000125650">
    <property type="expression patterns" value="Low tissue specificity"/>
</dbReference>
<dbReference type="MIM" id="602921">
    <property type="type" value="gene"/>
</dbReference>
<dbReference type="neXtProt" id="NX_O60542"/>
<dbReference type="OpenTargets" id="ENSG00000125650"/>
<dbReference type="PharmGKB" id="PA33930"/>
<dbReference type="VEuPathDB" id="HostDB:ENSG00000125650"/>
<dbReference type="eggNOG" id="ENOG502S9IE">
    <property type="taxonomic scope" value="Eukaryota"/>
</dbReference>
<dbReference type="GeneTree" id="ENSGT00950000182993"/>
<dbReference type="HOGENOM" id="CLU_102221_2_0_1"/>
<dbReference type="InParanoid" id="O60542"/>
<dbReference type="OMA" id="WHNAPCC"/>
<dbReference type="OrthoDB" id="9936891at2759"/>
<dbReference type="PAN-GO" id="O60542">
    <property type="GO annotations" value="2 GO annotations based on evolutionary models"/>
</dbReference>
<dbReference type="PhylomeDB" id="O60542"/>
<dbReference type="TreeFam" id="TF332366"/>
<dbReference type="PathwayCommons" id="O60542"/>
<dbReference type="Reactome" id="R-HSA-419037">
    <property type="pathway name" value="NCAM1 interactions"/>
</dbReference>
<dbReference type="Reactome" id="R-HSA-5673001">
    <property type="pathway name" value="RAF/MAP kinase cascade"/>
</dbReference>
<dbReference type="Reactome" id="R-HSA-8853659">
    <property type="pathway name" value="RET signaling"/>
</dbReference>
<dbReference type="SignaLink" id="O60542"/>
<dbReference type="SIGNOR" id="O60542"/>
<dbReference type="BioGRID-ORCS" id="5623">
    <property type="hits" value="11 hits in 1147 CRISPR screens"/>
</dbReference>
<dbReference type="GenomeRNAi" id="5623"/>
<dbReference type="Pharos" id="O60542">
    <property type="development level" value="Tbio"/>
</dbReference>
<dbReference type="PRO" id="PR:O60542"/>
<dbReference type="Proteomes" id="UP000005640">
    <property type="component" value="Chromosome 19"/>
</dbReference>
<dbReference type="RNAct" id="O60542">
    <property type="molecule type" value="protein"/>
</dbReference>
<dbReference type="Bgee" id="ENSG00000125650">
    <property type="expression patterns" value="Expressed in primordial germ cell in gonad and 99 other cell types or tissues"/>
</dbReference>
<dbReference type="ExpressionAtlas" id="O60542">
    <property type="expression patterns" value="baseline and differential"/>
</dbReference>
<dbReference type="GO" id="GO:0005576">
    <property type="term" value="C:extracellular region"/>
    <property type="evidence" value="ECO:0000304"/>
    <property type="project" value="Reactome"/>
</dbReference>
<dbReference type="GO" id="GO:0005615">
    <property type="term" value="C:extracellular space"/>
    <property type="evidence" value="ECO:0000314"/>
    <property type="project" value="UniProtKB"/>
</dbReference>
<dbReference type="GO" id="GO:0030116">
    <property type="term" value="F:glial cell-derived neurotrophic factor receptor binding"/>
    <property type="evidence" value="ECO:0007669"/>
    <property type="project" value="InterPro"/>
</dbReference>
<dbReference type="GO" id="GO:0008083">
    <property type="term" value="F:growth factor activity"/>
    <property type="evidence" value="ECO:0000314"/>
    <property type="project" value="UniProtKB"/>
</dbReference>
<dbReference type="GO" id="GO:0030971">
    <property type="term" value="F:receptor tyrosine kinase binding"/>
    <property type="evidence" value="ECO:0007669"/>
    <property type="project" value="InterPro"/>
</dbReference>
<dbReference type="GO" id="GO:0005102">
    <property type="term" value="F:signaling receptor binding"/>
    <property type="evidence" value="ECO:0000304"/>
    <property type="project" value="ProtInc"/>
</dbReference>
<dbReference type="GO" id="GO:0007417">
    <property type="term" value="P:central nervous system development"/>
    <property type="evidence" value="ECO:0000304"/>
    <property type="project" value="ProtInc"/>
</dbReference>
<dbReference type="GO" id="GO:0035860">
    <property type="term" value="P:glial cell-derived neurotrophic factor receptor signaling pathway"/>
    <property type="evidence" value="ECO:0000314"/>
    <property type="project" value="UniProtKB"/>
</dbReference>
<dbReference type="GO" id="GO:0007399">
    <property type="term" value="P:nervous system development"/>
    <property type="evidence" value="ECO:0000304"/>
    <property type="project" value="ProtInc"/>
</dbReference>
<dbReference type="GO" id="GO:0007422">
    <property type="term" value="P:peripheral nervous system development"/>
    <property type="evidence" value="ECO:0000318"/>
    <property type="project" value="GO_Central"/>
</dbReference>
<dbReference type="CDD" id="cd19382">
    <property type="entry name" value="TGF_beta_Persephin"/>
    <property type="match status" value="1"/>
</dbReference>
<dbReference type="FunFam" id="2.10.90.10:FF:000040">
    <property type="entry name" value="Persephin"/>
    <property type="match status" value="1"/>
</dbReference>
<dbReference type="Gene3D" id="2.10.90.10">
    <property type="entry name" value="Cystine-knot cytokines"/>
    <property type="match status" value="1"/>
</dbReference>
<dbReference type="InterPro" id="IPR029034">
    <property type="entry name" value="Cystine-knot_cytokine"/>
</dbReference>
<dbReference type="InterPro" id="IPR043401">
    <property type="entry name" value="GDNF_fam"/>
</dbReference>
<dbReference type="InterPro" id="IPR001839">
    <property type="entry name" value="TGF-b_C"/>
</dbReference>
<dbReference type="PANTHER" id="PTHR12173">
    <property type="entry name" value="GDNF SUBFAMILY OF TGF-BETA FAMILY"/>
    <property type="match status" value="1"/>
</dbReference>
<dbReference type="PANTHER" id="PTHR12173:SF8">
    <property type="entry name" value="PERSEPHIN"/>
    <property type="match status" value="1"/>
</dbReference>
<dbReference type="Pfam" id="PF00019">
    <property type="entry name" value="TGF_beta"/>
    <property type="match status" value="1"/>
</dbReference>
<dbReference type="SMART" id="SM00204">
    <property type="entry name" value="TGFB"/>
    <property type="match status" value="1"/>
</dbReference>
<dbReference type="SUPFAM" id="SSF57501">
    <property type="entry name" value="Cystine-knot cytokines"/>
    <property type="match status" value="1"/>
</dbReference>
<dbReference type="PROSITE" id="PS51362">
    <property type="entry name" value="TGF_BETA_2"/>
    <property type="match status" value="1"/>
</dbReference>
<protein>
    <recommendedName>
        <fullName evidence="6">Persephin</fullName>
        <shortName evidence="6">PSP</shortName>
    </recommendedName>
</protein>
<sequence length="156" mass="16600">MAVGKFLLGSLLLLSLQLGQGWGPDARGVPVADGEFSSEQVAKAGGTWLGTHRPLARLRRALSGPCQLWSLTLSVAELGLGYASEEKVIFRYCAGSCPRGARTQHGLALARLQGQGRAHGGPCCRPTRYTDVAFLDDRHRWQRLPQLSAAACGCGG</sequence>
<gene>
    <name evidence="5 9" type="primary">PSPN</name>
</gene>
<name>PSPN_HUMAN</name>